<sequence>MAKQTPLYDQHVACGARMVDFHGWMMPLHYGSQIDEHHFVRQDAGMFDVSHMTIVDLHGNRTREFLRYLLANDVAKLTQPGKALYTGMLNESGGVIDDLIVYFLSEDYFRLVVNSATRDKDLAWISQHAEPYQVEVTVRDDLALIAVQGPQAQQKVATLLTTEQQQAIAGMKPFFGIQTGDLFIATTGYTGEAGYEIALPKQQVVAFWQQLLAAGVKPAGLGARDTLRLEAGMNLYGQEMDEKTSPLAANMGWTVAWQPEDRQFIGRAALERQRMKGTEQLVGLIMTEKGVLRNELPVYFFDAAGNQHVGVITSGSFSPTLGFSIALARVPAGIGEHAVVQIRNREMPVRVTKPGFVRAGKAIVL</sequence>
<protein>
    <recommendedName>
        <fullName evidence="1">Aminomethyltransferase</fullName>
        <ecNumber evidence="1">2.1.2.10</ecNumber>
    </recommendedName>
    <alternativeName>
        <fullName evidence="1">Glycine cleavage system T protein</fullName>
    </alternativeName>
</protein>
<dbReference type="EC" id="2.1.2.10" evidence="1"/>
<dbReference type="EMBL" id="CP000901">
    <property type="protein sequence ID" value="ABX88028.1"/>
    <property type="molecule type" value="Genomic_DNA"/>
</dbReference>
<dbReference type="RefSeq" id="WP_002209949.1">
    <property type="nucleotide sequence ID" value="NZ_CP009935.1"/>
</dbReference>
<dbReference type="SMR" id="A9R4K6"/>
<dbReference type="GeneID" id="57973733"/>
<dbReference type="KEGG" id="ypg:YpAngola_A3830"/>
<dbReference type="PATRIC" id="fig|349746.12.peg.546"/>
<dbReference type="GO" id="GO:0005829">
    <property type="term" value="C:cytosol"/>
    <property type="evidence" value="ECO:0007669"/>
    <property type="project" value="TreeGrafter"/>
</dbReference>
<dbReference type="GO" id="GO:0005960">
    <property type="term" value="C:glycine cleavage complex"/>
    <property type="evidence" value="ECO:0007669"/>
    <property type="project" value="InterPro"/>
</dbReference>
<dbReference type="GO" id="GO:0004047">
    <property type="term" value="F:aminomethyltransferase activity"/>
    <property type="evidence" value="ECO:0007669"/>
    <property type="project" value="UniProtKB-UniRule"/>
</dbReference>
<dbReference type="GO" id="GO:0008483">
    <property type="term" value="F:transaminase activity"/>
    <property type="evidence" value="ECO:0007669"/>
    <property type="project" value="UniProtKB-KW"/>
</dbReference>
<dbReference type="GO" id="GO:0019464">
    <property type="term" value="P:glycine decarboxylation via glycine cleavage system"/>
    <property type="evidence" value="ECO:0007669"/>
    <property type="project" value="UniProtKB-UniRule"/>
</dbReference>
<dbReference type="FunFam" id="2.40.30.110:FF:000001">
    <property type="entry name" value="Aminomethyltransferase"/>
    <property type="match status" value="1"/>
</dbReference>
<dbReference type="FunFam" id="3.30.70.1400:FF:000001">
    <property type="entry name" value="Aminomethyltransferase"/>
    <property type="match status" value="1"/>
</dbReference>
<dbReference type="FunFam" id="4.10.1250.10:FF:000001">
    <property type="entry name" value="Aminomethyltransferase"/>
    <property type="match status" value="1"/>
</dbReference>
<dbReference type="Gene3D" id="2.40.30.110">
    <property type="entry name" value="Aminomethyltransferase beta-barrel domains"/>
    <property type="match status" value="1"/>
</dbReference>
<dbReference type="Gene3D" id="3.30.70.1400">
    <property type="entry name" value="Aminomethyltransferase beta-barrel domains"/>
    <property type="match status" value="1"/>
</dbReference>
<dbReference type="Gene3D" id="4.10.1250.10">
    <property type="entry name" value="Aminomethyltransferase fragment"/>
    <property type="match status" value="1"/>
</dbReference>
<dbReference type="Gene3D" id="3.30.1360.120">
    <property type="entry name" value="Probable tRNA modification gtpase trme, domain 1"/>
    <property type="match status" value="1"/>
</dbReference>
<dbReference type="HAMAP" id="MF_00259">
    <property type="entry name" value="GcvT"/>
    <property type="match status" value="1"/>
</dbReference>
<dbReference type="InterPro" id="IPR006223">
    <property type="entry name" value="GCS_T"/>
</dbReference>
<dbReference type="InterPro" id="IPR022903">
    <property type="entry name" value="GCS_T_bac"/>
</dbReference>
<dbReference type="InterPro" id="IPR013977">
    <property type="entry name" value="GCST_C"/>
</dbReference>
<dbReference type="InterPro" id="IPR006222">
    <property type="entry name" value="GCV_T_N"/>
</dbReference>
<dbReference type="InterPro" id="IPR028896">
    <property type="entry name" value="GcvT/YgfZ/DmdA"/>
</dbReference>
<dbReference type="InterPro" id="IPR029043">
    <property type="entry name" value="GcvT/YgfZ_C"/>
</dbReference>
<dbReference type="InterPro" id="IPR027266">
    <property type="entry name" value="TrmE/GcvT_dom1"/>
</dbReference>
<dbReference type="NCBIfam" id="TIGR00528">
    <property type="entry name" value="gcvT"/>
    <property type="match status" value="1"/>
</dbReference>
<dbReference type="NCBIfam" id="NF001567">
    <property type="entry name" value="PRK00389.1"/>
    <property type="match status" value="1"/>
</dbReference>
<dbReference type="PANTHER" id="PTHR43757">
    <property type="entry name" value="AMINOMETHYLTRANSFERASE"/>
    <property type="match status" value="1"/>
</dbReference>
<dbReference type="PANTHER" id="PTHR43757:SF2">
    <property type="entry name" value="AMINOMETHYLTRANSFERASE, MITOCHONDRIAL"/>
    <property type="match status" value="1"/>
</dbReference>
<dbReference type="Pfam" id="PF01571">
    <property type="entry name" value="GCV_T"/>
    <property type="match status" value="1"/>
</dbReference>
<dbReference type="Pfam" id="PF08669">
    <property type="entry name" value="GCV_T_C"/>
    <property type="match status" value="1"/>
</dbReference>
<dbReference type="PIRSF" id="PIRSF006487">
    <property type="entry name" value="GcvT"/>
    <property type="match status" value="1"/>
</dbReference>
<dbReference type="SUPFAM" id="SSF101790">
    <property type="entry name" value="Aminomethyltransferase beta-barrel domain"/>
    <property type="match status" value="1"/>
</dbReference>
<dbReference type="SUPFAM" id="SSF103025">
    <property type="entry name" value="Folate-binding domain"/>
    <property type="match status" value="1"/>
</dbReference>
<gene>
    <name evidence="1" type="primary">gcvT</name>
    <name type="ordered locus">YpAngola_A3830</name>
</gene>
<organism>
    <name type="scientific">Yersinia pestis bv. Antiqua (strain Angola)</name>
    <dbReference type="NCBI Taxonomy" id="349746"/>
    <lineage>
        <taxon>Bacteria</taxon>
        <taxon>Pseudomonadati</taxon>
        <taxon>Pseudomonadota</taxon>
        <taxon>Gammaproteobacteria</taxon>
        <taxon>Enterobacterales</taxon>
        <taxon>Yersiniaceae</taxon>
        <taxon>Yersinia</taxon>
    </lineage>
</organism>
<keyword id="KW-0032">Aminotransferase</keyword>
<keyword id="KW-0808">Transferase</keyword>
<proteinExistence type="inferred from homology"/>
<comment type="function">
    <text evidence="1">The glycine cleavage system catalyzes the degradation of glycine.</text>
</comment>
<comment type="catalytic activity">
    <reaction evidence="1">
        <text>N(6)-[(R)-S(8)-aminomethyldihydrolipoyl]-L-lysyl-[protein] + (6S)-5,6,7,8-tetrahydrofolate = N(6)-[(R)-dihydrolipoyl]-L-lysyl-[protein] + (6R)-5,10-methylene-5,6,7,8-tetrahydrofolate + NH4(+)</text>
        <dbReference type="Rhea" id="RHEA:16945"/>
        <dbReference type="Rhea" id="RHEA-COMP:10475"/>
        <dbReference type="Rhea" id="RHEA-COMP:10492"/>
        <dbReference type="ChEBI" id="CHEBI:15636"/>
        <dbReference type="ChEBI" id="CHEBI:28938"/>
        <dbReference type="ChEBI" id="CHEBI:57453"/>
        <dbReference type="ChEBI" id="CHEBI:83100"/>
        <dbReference type="ChEBI" id="CHEBI:83143"/>
        <dbReference type="EC" id="2.1.2.10"/>
    </reaction>
</comment>
<comment type="subunit">
    <text evidence="1">The glycine cleavage system is composed of four proteins: P, T, L and H.</text>
</comment>
<comment type="similarity">
    <text evidence="1">Belongs to the GcvT family.</text>
</comment>
<accession>A9R4K6</accession>
<evidence type="ECO:0000255" key="1">
    <source>
        <dbReference type="HAMAP-Rule" id="MF_00259"/>
    </source>
</evidence>
<name>GCST_YERPG</name>
<feature type="chain" id="PRO_1000114129" description="Aminomethyltransferase">
    <location>
        <begin position="1"/>
        <end position="365"/>
    </location>
</feature>
<reference key="1">
    <citation type="journal article" date="2010" name="J. Bacteriol.">
        <title>Genome sequence of the deep-rooted Yersinia pestis strain Angola reveals new insights into the evolution and pangenome of the plague bacterium.</title>
        <authorList>
            <person name="Eppinger M."/>
            <person name="Worsham P.L."/>
            <person name="Nikolich M.P."/>
            <person name="Riley D.R."/>
            <person name="Sebastian Y."/>
            <person name="Mou S."/>
            <person name="Achtman M."/>
            <person name="Lindler L.E."/>
            <person name="Ravel J."/>
        </authorList>
    </citation>
    <scope>NUCLEOTIDE SEQUENCE [LARGE SCALE GENOMIC DNA]</scope>
    <source>
        <strain>Angola</strain>
    </source>
</reference>